<name>MARH5_DANRE</name>
<dbReference type="EC" id="2.3.2.27"/>
<dbReference type="EMBL" id="BC066555">
    <property type="protein sequence ID" value="AAH66555.1"/>
    <property type="molecule type" value="mRNA"/>
</dbReference>
<dbReference type="RefSeq" id="NP_956033.2">
    <property type="nucleotide sequence ID" value="NM_199739.3"/>
</dbReference>
<dbReference type="FunCoup" id="Q6NYK8">
    <property type="interactions" value="1"/>
</dbReference>
<dbReference type="STRING" id="7955.ENSDARP00000037207"/>
<dbReference type="PaxDb" id="7955-ENSDARP00000037207"/>
<dbReference type="Ensembl" id="ENSDART00000039187">
    <property type="protein sequence ID" value="ENSDARP00000037207"/>
    <property type="gene ID" value="ENSDARG00000028559"/>
</dbReference>
<dbReference type="GeneID" id="326067"/>
<dbReference type="KEGG" id="dre:326067"/>
<dbReference type="AGR" id="ZFIN:ZDB-GENE-030131-4792"/>
<dbReference type="CTD" id="326067"/>
<dbReference type="ZFIN" id="ZDB-GENE-030131-4792">
    <property type="gene designation" value="marchf5l"/>
</dbReference>
<dbReference type="eggNOG" id="KOG3053">
    <property type="taxonomic scope" value="Eukaryota"/>
</dbReference>
<dbReference type="HOGENOM" id="CLU_046472_1_0_1"/>
<dbReference type="InParanoid" id="Q6NYK8"/>
<dbReference type="OMA" id="HWEDYIV"/>
<dbReference type="OrthoDB" id="5817083at2759"/>
<dbReference type="PhylomeDB" id="Q6NYK8"/>
<dbReference type="TreeFam" id="TF316219"/>
<dbReference type="UniPathway" id="UPA00143"/>
<dbReference type="PRO" id="PR:Q6NYK8"/>
<dbReference type="Proteomes" id="UP000000437">
    <property type="component" value="Chromosome 10"/>
</dbReference>
<dbReference type="Bgee" id="ENSDARG00000028559">
    <property type="expression patterns" value="Expressed in intestine and 26 other cell types or tissues"/>
</dbReference>
<dbReference type="GO" id="GO:0005783">
    <property type="term" value="C:endoplasmic reticulum"/>
    <property type="evidence" value="ECO:0000250"/>
    <property type="project" value="UniProtKB"/>
</dbReference>
<dbReference type="GO" id="GO:0005789">
    <property type="term" value="C:endoplasmic reticulum membrane"/>
    <property type="evidence" value="ECO:0007669"/>
    <property type="project" value="UniProtKB-SubCell"/>
</dbReference>
<dbReference type="GO" id="GO:0005741">
    <property type="term" value="C:mitochondrial outer membrane"/>
    <property type="evidence" value="ECO:0000250"/>
    <property type="project" value="UniProtKB"/>
</dbReference>
<dbReference type="GO" id="GO:0061630">
    <property type="term" value="F:ubiquitin protein ligase activity"/>
    <property type="evidence" value="ECO:0000250"/>
    <property type="project" value="UniProtKB"/>
</dbReference>
<dbReference type="GO" id="GO:0008270">
    <property type="term" value="F:zinc ion binding"/>
    <property type="evidence" value="ECO:0007669"/>
    <property type="project" value="UniProtKB-KW"/>
</dbReference>
<dbReference type="GO" id="GO:0051865">
    <property type="term" value="P:protein autoubiquitination"/>
    <property type="evidence" value="ECO:0000250"/>
    <property type="project" value="UniProtKB"/>
</dbReference>
<dbReference type="GO" id="GO:0000209">
    <property type="term" value="P:protein polyubiquitination"/>
    <property type="evidence" value="ECO:0000318"/>
    <property type="project" value="GO_Central"/>
</dbReference>
<dbReference type="GO" id="GO:0090140">
    <property type="term" value="P:regulation of mitochondrial fission"/>
    <property type="evidence" value="ECO:0000250"/>
    <property type="project" value="UniProtKB"/>
</dbReference>
<dbReference type="CDD" id="cd16701">
    <property type="entry name" value="RING_CH-C4HC3_MARCH5"/>
    <property type="match status" value="1"/>
</dbReference>
<dbReference type="FunFam" id="3.30.40.10:FF:000262">
    <property type="entry name" value="E3 ubiquitin-protein ligase MARCH5"/>
    <property type="match status" value="1"/>
</dbReference>
<dbReference type="Gene3D" id="3.30.40.10">
    <property type="entry name" value="Zinc/RING finger domain, C3HC4 (zinc finger)"/>
    <property type="match status" value="1"/>
</dbReference>
<dbReference type="InterPro" id="IPR011016">
    <property type="entry name" value="Znf_RING-CH"/>
</dbReference>
<dbReference type="InterPro" id="IPR013083">
    <property type="entry name" value="Znf_RING/FYVE/PHD"/>
</dbReference>
<dbReference type="PANTHER" id="PTHR46283">
    <property type="entry name" value="E3 UBIQUITIN-PROTEIN LIGASE MARCH5"/>
    <property type="match status" value="1"/>
</dbReference>
<dbReference type="Pfam" id="PF12906">
    <property type="entry name" value="RINGv"/>
    <property type="match status" value="1"/>
</dbReference>
<dbReference type="SMART" id="SM00744">
    <property type="entry name" value="RINGv"/>
    <property type="match status" value="1"/>
</dbReference>
<dbReference type="SUPFAM" id="SSF57850">
    <property type="entry name" value="RING/U-box"/>
    <property type="match status" value="1"/>
</dbReference>
<dbReference type="PROSITE" id="PS51292">
    <property type="entry name" value="ZF_RING_CH"/>
    <property type="match status" value="1"/>
</dbReference>
<comment type="function">
    <text evidence="1">Mitochondrial E3 ubiquitin-protein ligase that plays a crucial role in the control of mitochondrial morphology by acting as a positive regulator of mitochondrial fission. May play a role in the prevention of cell senescence acting as a regulator of mitochondrial quality control.</text>
</comment>
<comment type="catalytic activity">
    <reaction>
        <text>S-ubiquitinyl-[E2 ubiquitin-conjugating enzyme]-L-cysteine + [acceptor protein]-L-lysine = [E2 ubiquitin-conjugating enzyme]-L-cysteine + N(6)-ubiquitinyl-[acceptor protein]-L-lysine.</text>
        <dbReference type="EC" id="2.3.2.27"/>
    </reaction>
</comment>
<comment type="pathway">
    <text>Protein modification; protein ubiquitination.</text>
</comment>
<comment type="subcellular location">
    <subcellularLocation>
        <location evidence="1">Mitochondrion outer membrane</location>
        <topology evidence="2">Multi-pass membrane protein</topology>
    </subcellularLocation>
    <subcellularLocation>
        <location evidence="1">Endoplasmic reticulum membrane</location>
        <topology evidence="2">Multi-pass membrane protein</topology>
    </subcellularLocation>
</comment>
<comment type="domain">
    <text evidence="3">The RING-CH-type zinc finger domain is required for E3 ligase activity.</text>
</comment>
<accession>Q6NYK8</accession>
<feature type="chain" id="PRO_0000271772" description="E3 ubiquitin-protein ligase MARCHF5">
    <location>
        <begin position="1"/>
        <end position="289"/>
    </location>
</feature>
<feature type="transmembrane region" description="Helical" evidence="2">
    <location>
        <begin position="97"/>
        <end position="117"/>
    </location>
</feature>
<feature type="transmembrane region" description="Helical" evidence="2">
    <location>
        <begin position="137"/>
        <end position="157"/>
    </location>
</feature>
<feature type="transmembrane region" description="Helical" evidence="2">
    <location>
        <begin position="202"/>
        <end position="222"/>
    </location>
</feature>
<feature type="transmembrane region" description="Helical" evidence="2">
    <location>
        <begin position="236"/>
        <end position="256"/>
    </location>
</feature>
<feature type="zinc finger region" description="RING-CH-type" evidence="3">
    <location>
        <begin position="4"/>
        <end position="73"/>
    </location>
</feature>
<feature type="binding site" evidence="3">
    <location>
        <position position="12"/>
    </location>
    <ligand>
        <name>Zn(2+)</name>
        <dbReference type="ChEBI" id="CHEBI:29105"/>
        <label>1</label>
    </ligand>
</feature>
<feature type="binding site" evidence="3">
    <location>
        <position position="15"/>
    </location>
    <ligand>
        <name>Zn(2+)</name>
        <dbReference type="ChEBI" id="CHEBI:29105"/>
        <label>1</label>
    </ligand>
</feature>
<feature type="binding site" evidence="3">
    <location>
        <position position="31"/>
    </location>
    <ligand>
        <name>Zn(2+)</name>
        <dbReference type="ChEBI" id="CHEBI:29105"/>
        <label>2</label>
    </ligand>
</feature>
<feature type="binding site" evidence="3">
    <location>
        <position position="33"/>
    </location>
    <ligand>
        <name>Zn(2+)</name>
        <dbReference type="ChEBI" id="CHEBI:29105"/>
        <label>2</label>
    </ligand>
</feature>
<feature type="binding site" evidence="3">
    <location>
        <position position="41"/>
    </location>
    <ligand>
        <name>Zn(2+)</name>
        <dbReference type="ChEBI" id="CHEBI:29105"/>
        <label>1</label>
    </ligand>
</feature>
<feature type="binding site" evidence="3">
    <location>
        <position position="44"/>
    </location>
    <ligand>
        <name>Zn(2+)</name>
        <dbReference type="ChEBI" id="CHEBI:29105"/>
        <label>1</label>
    </ligand>
</feature>
<feature type="binding site" evidence="3">
    <location>
        <position position="63"/>
    </location>
    <ligand>
        <name>Zn(2+)</name>
        <dbReference type="ChEBI" id="CHEBI:29105"/>
        <label>2</label>
    </ligand>
</feature>
<feature type="binding site" evidence="3">
    <location>
        <position position="66"/>
    </location>
    <ligand>
        <name>Zn(2+)</name>
        <dbReference type="ChEBI" id="CHEBI:29105"/>
        <label>2</label>
    </ligand>
</feature>
<gene>
    <name type="primary">marchf5</name>
    <name type="synonym">march5</name>
    <name type="synonym">march5l</name>
    <name type="ORF">zgc:56713</name>
</gene>
<protein>
    <recommendedName>
        <fullName>E3 ubiquitin-protein ligase MARCHF5</fullName>
        <ecNumber>2.3.2.27</ecNumber>
    </recommendedName>
    <alternativeName>
        <fullName>Membrane-associated RING finger protein 5</fullName>
    </alternativeName>
    <alternativeName>
        <fullName>Membrane-associated RING-CH protein V</fullName>
        <shortName>MARCH-V</shortName>
    </alternativeName>
    <alternativeName>
        <fullName evidence="4">RING-type E3 ubiquitin transferase MARCHF5</fullName>
    </alternativeName>
</protein>
<organism>
    <name type="scientific">Danio rerio</name>
    <name type="common">Zebrafish</name>
    <name type="synonym">Brachydanio rerio</name>
    <dbReference type="NCBI Taxonomy" id="7955"/>
    <lineage>
        <taxon>Eukaryota</taxon>
        <taxon>Metazoa</taxon>
        <taxon>Chordata</taxon>
        <taxon>Craniata</taxon>
        <taxon>Vertebrata</taxon>
        <taxon>Euteleostomi</taxon>
        <taxon>Actinopterygii</taxon>
        <taxon>Neopterygii</taxon>
        <taxon>Teleostei</taxon>
        <taxon>Ostariophysi</taxon>
        <taxon>Cypriniformes</taxon>
        <taxon>Danionidae</taxon>
        <taxon>Danioninae</taxon>
        <taxon>Danio</taxon>
    </lineage>
</organism>
<sequence>MACVDEPPEKHCWVCFATEKEDRAAEWVSPCRCKGCTKWIHQSCLQRWLDEKQKGNSGGAVSCPQCGTEYRIVFPKMGPVVYFLQQVDRALSRASPFAAAGVVVGTVYWSAVTYGAVTVMQVVGHKKGLDVMERADPLFLLMGLPTIPVMLVLGKMIRWEDYVVRLWQRHSAKLQIFSGLVPGMGRALPRVPVEGSYGGDHLSVSRTLCGALIFPSIANLVGRLLFRRVTSNLQRTILGGIAFVVMKGVLKVYFKQQQYLIQANRHILNYPEPEGQADGATEDEDSSNE</sequence>
<reference key="1">
    <citation type="submission" date="2004-02" db="EMBL/GenBank/DDBJ databases">
        <authorList>
            <consortium name="NIH - Zebrafish Gene Collection (ZGC) project"/>
        </authorList>
    </citation>
    <scope>NUCLEOTIDE SEQUENCE [LARGE SCALE MRNA]</scope>
    <source>
        <tissue>Kidney</tissue>
    </source>
</reference>
<proteinExistence type="evidence at transcript level"/>
<evidence type="ECO:0000250" key="1">
    <source>
        <dbReference type="UniProtKB" id="Q9NX47"/>
    </source>
</evidence>
<evidence type="ECO:0000255" key="2"/>
<evidence type="ECO:0000255" key="3">
    <source>
        <dbReference type="PROSITE-ProRule" id="PRU00623"/>
    </source>
</evidence>
<evidence type="ECO:0000305" key="4"/>
<keyword id="KW-0256">Endoplasmic reticulum</keyword>
<keyword id="KW-0472">Membrane</keyword>
<keyword id="KW-0479">Metal-binding</keyword>
<keyword id="KW-0496">Mitochondrion</keyword>
<keyword id="KW-1000">Mitochondrion outer membrane</keyword>
<keyword id="KW-1185">Reference proteome</keyword>
<keyword id="KW-0808">Transferase</keyword>
<keyword id="KW-0812">Transmembrane</keyword>
<keyword id="KW-1133">Transmembrane helix</keyword>
<keyword id="KW-0833">Ubl conjugation pathway</keyword>
<keyword id="KW-0862">Zinc</keyword>
<keyword id="KW-0863">Zinc-finger</keyword>